<dbReference type="EC" id="2.1.1.170" evidence="1"/>
<dbReference type="EMBL" id="CP000749">
    <property type="protein sequence ID" value="ABR73367.1"/>
    <property type="molecule type" value="Genomic_DNA"/>
</dbReference>
<dbReference type="SMR" id="A6W3T8"/>
<dbReference type="STRING" id="400668.Mmwyl1_4472"/>
<dbReference type="KEGG" id="mmw:Mmwyl1_4472"/>
<dbReference type="eggNOG" id="COG0357">
    <property type="taxonomic scope" value="Bacteria"/>
</dbReference>
<dbReference type="HOGENOM" id="CLU_065341_2_0_6"/>
<dbReference type="OrthoDB" id="9808773at2"/>
<dbReference type="GO" id="GO:0005829">
    <property type="term" value="C:cytosol"/>
    <property type="evidence" value="ECO:0007669"/>
    <property type="project" value="TreeGrafter"/>
</dbReference>
<dbReference type="GO" id="GO:0070043">
    <property type="term" value="F:rRNA (guanine-N7-)-methyltransferase activity"/>
    <property type="evidence" value="ECO:0007669"/>
    <property type="project" value="UniProtKB-UniRule"/>
</dbReference>
<dbReference type="CDD" id="cd02440">
    <property type="entry name" value="AdoMet_MTases"/>
    <property type="match status" value="1"/>
</dbReference>
<dbReference type="Gene3D" id="3.40.50.150">
    <property type="entry name" value="Vaccinia Virus protein VP39"/>
    <property type="match status" value="1"/>
</dbReference>
<dbReference type="HAMAP" id="MF_00074">
    <property type="entry name" value="16SrRNA_methyltr_G"/>
    <property type="match status" value="1"/>
</dbReference>
<dbReference type="InterPro" id="IPR003682">
    <property type="entry name" value="rRNA_ssu_MeTfrase_G"/>
</dbReference>
<dbReference type="InterPro" id="IPR029063">
    <property type="entry name" value="SAM-dependent_MTases_sf"/>
</dbReference>
<dbReference type="NCBIfam" id="TIGR00138">
    <property type="entry name" value="rsmG_gidB"/>
    <property type="match status" value="1"/>
</dbReference>
<dbReference type="PANTHER" id="PTHR31760">
    <property type="entry name" value="S-ADENOSYL-L-METHIONINE-DEPENDENT METHYLTRANSFERASES SUPERFAMILY PROTEIN"/>
    <property type="match status" value="1"/>
</dbReference>
<dbReference type="PANTHER" id="PTHR31760:SF0">
    <property type="entry name" value="S-ADENOSYL-L-METHIONINE-DEPENDENT METHYLTRANSFERASES SUPERFAMILY PROTEIN"/>
    <property type="match status" value="1"/>
</dbReference>
<dbReference type="Pfam" id="PF02527">
    <property type="entry name" value="GidB"/>
    <property type="match status" value="1"/>
</dbReference>
<dbReference type="PIRSF" id="PIRSF003078">
    <property type="entry name" value="GidB"/>
    <property type="match status" value="1"/>
</dbReference>
<dbReference type="SUPFAM" id="SSF53335">
    <property type="entry name" value="S-adenosyl-L-methionine-dependent methyltransferases"/>
    <property type="match status" value="1"/>
</dbReference>
<accession>A6W3T8</accession>
<reference key="1">
    <citation type="submission" date="2007-06" db="EMBL/GenBank/DDBJ databases">
        <title>Complete sequence of Marinomonas sp. MWYL1.</title>
        <authorList>
            <consortium name="US DOE Joint Genome Institute"/>
            <person name="Copeland A."/>
            <person name="Lucas S."/>
            <person name="Lapidus A."/>
            <person name="Barry K."/>
            <person name="Glavina del Rio T."/>
            <person name="Dalin E."/>
            <person name="Tice H."/>
            <person name="Pitluck S."/>
            <person name="Kiss H."/>
            <person name="Brettin T."/>
            <person name="Bruce D."/>
            <person name="Detter J.C."/>
            <person name="Han C."/>
            <person name="Schmutz J."/>
            <person name="Larimer F."/>
            <person name="Land M."/>
            <person name="Hauser L."/>
            <person name="Kyrpides N."/>
            <person name="Kim E."/>
            <person name="Johnston A.W.B."/>
            <person name="Todd J.D."/>
            <person name="Rogers R."/>
            <person name="Wexler M."/>
            <person name="Bond P.L."/>
            <person name="Li Y."/>
            <person name="Richardson P."/>
        </authorList>
    </citation>
    <scope>NUCLEOTIDE SEQUENCE [LARGE SCALE GENOMIC DNA]</scope>
    <source>
        <strain>MWYL1</strain>
    </source>
</reference>
<gene>
    <name evidence="1" type="primary">rsmG</name>
    <name type="ordered locus">Mmwyl1_4472</name>
</gene>
<proteinExistence type="inferred from homology"/>
<feature type="chain" id="PRO_0000335370" description="Ribosomal RNA small subunit methyltransferase G">
    <location>
        <begin position="1"/>
        <end position="208"/>
    </location>
</feature>
<feature type="binding site" evidence="1">
    <location>
        <position position="75"/>
    </location>
    <ligand>
        <name>S-adenosyl-L-methionine</name>
        <dbReference type="ChEBI" id="CHEBI:59789"/>
    </ligand>
</feature>
<feature type="binding site" evidence="1">
    <location>
        <position position="80"/>
    </location>
    <ligand>
        <name>S-adenosyl-L-methionine</name>
        <dbReference type="ChEBI" id="CHEBI:59789"/>
    </ligand>
</feature>
<feature type="binding site" evidence="1">
    <location>
        <begin position="126"/>
        <end position="127"/>
    </location>
    <ligand>
        <name>S-adenosyl-L-methionine</name>
        <dbReference type="ChEBI" id="CHEBI:59789"/>
    </ligand>
</feature>
<feature type="binding site" evidence="1">
    <location>
        <position position="141"/>
    </location>
    <ligand>
        <name>S-adenosyl-L-methionine</name>
        <dbReference type="ChEBI" id="CHEBI:59789"/>
    </ligand>
</feature>
<comment type="function">
    <text evidence="1">Specifically methylates the N7 position of guanine in position 527 of 16S rRNA.</text>
</comment>
<comment type="catalytic activity">
    <reaction evidence="1">
        <text>guanosine(527) in 16S rRNA + S-adenosyl-L-methionine = N(7)-methylguanosine(527) in 16S rRNA + S-adenosyl-L-homocysteine</text>
        <dbReference type="Rhea" id="RHEA:42732"/>
        <dbReference type="Rhea" id="RHEA-COMP:10209"/>
        <dbReference type="Rhea" id="RHEA-COMP:10210"/>
        <dbReference type="ChEBI" id="CHEBI:57856"/>
        <dbReference type="ChEBI" id="CHEBI:59789"/>
        <dbReference type="ChEBI" id="CHEBI:74269"/>
        <dbReference type="ChEBI" id="CHEBI:74480"/>
        <dbReference type="EC" id="2.1.1.170"/>
    </reaction>
</comment>
<comment type="subcellular location">
    <subcellularLocation>
        <location evidence="1">Cytoplasm</location>
    </subcellularLocation>
</comment>
<comment type="similarity">
    <text evidence="1">Belongs to the methyltransferase superfamily. RNA methyltransferase RsmG family.</text>
</comment>
<keyword id="KW-0963">Cytoplasm</keyword>
<keyword id="KW-0489">Methyltransferase</keyword>
<keyword id="KW-0698">rRNA processing</keyword>
<keyword id="KW-0949">S-adenosyl-L-methionine</keyword>
<keyword id="KW-0808">Transferase</keyword>
<protein>
    <recommendedName>
        <fullName evidence="1">Ribosomal RNA small subunit methyltransferase G</fullName>
        <ecNumber evidence="1">2.1.1.170</ecNumber>
    </recommendedName>
    <alternativeName>
        <fullName evidence="1">16S rRNA 7-methylguanosine methyltransferase</fullName>
        <shortName evidence="1">16S rRNA m7G methyltransferase</shortName>
    </alternativeName>
</protein>
<evidence type="ECO:0000255" key="1">
    <source>
        <dbReference type="HAMAP-Rule" id="MF_00074"/>
    </source>
</evidence>
<name>RSMG_MARMS</name>
<organism>
    <name type="scientific">Marinomonas sp. (strain MWYL1)</name>
    <dbReference type="NCBI Taxonomy" id="400668"/>
    <lineage>
        <taxon>Bacteria</taxon>
        <taxon>Pseudomonadati</taxon>
        <taxon>Pseudomonadota</taxon>
        <taxon>Gammaproteobacteria</taxon>
        <taxon>Oceanospirillales</taxon>
        <taxon>Oceanospirillaceae</taxon>
        <taxon>Marinomonas</taxon>
    </lineage>
</organism>
<sequence length="208" mass="23132">MTHFDTIQKGAQQMGAALSDETIQTLVKYLAMLEKWNKAYNLTAIRDVEQMISLHLLDSLATLPYITGDNIIDVGTGPGLPGMVLAICYPEKRFTLLDSNGKKTRFLTQVKMELGIHNATVANERVEKHSHQGEYDHVISRAFASLQDMINWTLPLPKETGNFLAMKGVYPSEEIAALPKEVGLVSVEPLNVPNVQAERHMVVMTRKG</sequence>